<organism>
    <name type="scientific">Mus musculus</name>
    <name type="common">Mouse</name>
    <dbReference type="NCBI Taxonomy" id="10090"/>
    <lineage>
        <taxon>Eukaryota</taxon>
        <taxon>Metazoa</taxon>
        <taxon>Chordata</taxon>
        <taxon>Craniata</taxon>
        <taxon>Vertebrata</taxon>
        <taxon>Euteleostomi</taxon>
        <taxon>Mammalia</taxon>
        <taxon>Eutheria</taxon>
        <taxon>Euarchontoglires</taxon>
        <taxon>Glires</taxon>
        <taxon>Rodentia</taxon>
        <taxon>Myomorpha</taxon>
        <taxon>Muroidea</taxon>
        <taxon>Muridae</taxon>
        <taxon>Murinae</taxon>
        <taxon>Mus</taxon>
        <taxon>Mus</taxon>
    </lineage>
</organism>
<protein>
    <recommendedName>
        <fullName>Tyrosine-protein kinase STYK1</fullName>
        <ecNumber>2.7.10.2</ecNumber>
    </recommendedName>
    <alternativeName>
        <fullName>Novel oncogene with kinase domain</fullName>
        <shortName>mNOK</shortName>
    </alternativeName>
    <alternativeName>
        <fullName>Serine/threonine/tyrosine kinase 1</fullName>
    </alternativeName>
</protein>
<name>STYK1_MOUSE</name>
<gene>
    <name type="primary">Styk1</name>
    <name type="synonym">Nok</name>
</gene>
<reference key="1">
    <citation type="journal article" date="2004" name="Cancer Res.">
        <title>A novel protein tyrosine kinase NOK that shares homology with platelet-derived growth factor/fibroblast growth factor receptors induces tumorigenesis and metastasis in nude mice.</title>
        <authorList>
            <person name="Liu L."/>
            <person name="Yu X.-Z."/>
            <person name="Li T.-S."/>
            <person name="Song L.-X."/>
            <person name="Chen P.-L."/>
            <person name="Suo T.-L."/>
            <person name="Li Y.-H."/>
            <person name="Wang S.-D."/>
            <person name="Chen Y."/>
            <person name="Ren Y.-M."/>
            <person name="Zhang S.-P."/>
            <person name="Chang Z.-J."/>
            <person name="Fu X.-Y."/>
        </authorList>
    </citation>
    <scope>NUCLEOTIDE SEQUENCE [MRNA] (ISOFORM 1)</scope>
    <scope>FUNCTION</scope>
    <scope>SUBCELLULAR LOCATION</scope>
    <scope>TISSUE SPECIFICITY</scope>
    <source>
        <strain>KM</strain>
        <tissue>Colon</tissue>
    </source>
</reference>
<reference key="2">
    <citation type="journal article" date="2005" name="Science">
        <title>The transcriptional landscape of the mammalian genome.</title>
        <authorList>
            <person name="Carninci P."/>
            <person name="Kasukawa T."/>
            <person name="Katayama S."/>
            <person name="Gough J."/>
            <person name="Frith M.C."/>
            <person name="Maeda N."/>
            <person name="Oyama R."/>
            <person name="Ravasi T."/>
            <person name="Lenhard B."/>
            <person name="Wells C."/>
            <person name="Kodzius R."/>
            <person name="Shimokawa K."/>
            <person name="Bajic V.B."/>
            <person name="Brenner S.E."/>
            <person name="Batalov S."/>
            <person name="Forrest A.R."/>
            <person name="Zavolan M."/>
            <person name="Davis M.J."/>
            <person name="Wilming L.G."/>
            <person name="Aidinis V."/>
            <person name="Allen J.E."/>
            <person name="Ambesi-Impiombato A."/>
            <person name="Apweiler R."/>
            <person name="Aturaliya R.N."/>
            <person name="Bailey T.L."/>
            <person name="Bansal M."/>
            <person name="Baxter L."/>
            <person name="Beisel K.W."/>
            <person name="Bersano T."/>
            <person name="Bono H."/>
            <person name="Chalk A.M."/>
            <person name="Chiu K.P."/>
            <person name="Choudhary V."/>
            <person name="Christoffels A."/>
            <person name="Clutterbuck D.R."/>
            <person name="Crowe M.L."/>
            <person name="Dalla E."/>
            <person name="Dalrymple B.P."/>
            <person name="de Bono B."/>
            <person name="Della Gatta G."/>
            <person name="di Bernardo D."/>
            <person name="Down T."/>
            <person name="Engstrom P."/>
            <person name="Fagiolini M."/>
            <person name="Faulkner G."/>
            <person name="Fletcher C.F."/>
            <person name="Fukushima T."/>
            <person name="Furuno M."/>
            <person name="Futaki S."/>
            <person name="Gariboldi M."/>
            <person name="Georgii-Hemming P."/>
            <person name="Gingeras T.R."/>
            <person name="Gojobori T."/>
            <person name="Green R.E."/>
            <person name="Gustincich S."/>
            <person name="Harbers M."/>
            <person name="Hayashi Y."/>
            <person name="Hensch T.K."/>
            <person name="Hirokawa N."/>
            <person name="Hill D."/>
            <person name="Huminiecki L."/>
            <person name="Iacono M."/>
            <person name="Ikeo K."/>
            <person name="Iwama A."/>
            <person name="Ishikawa T."/>
            <person name="Jakt M."/>
            <person name="Kanapin A."/>
            <person name="Katoh M."/>
            <person name="Kawasawa Y."/>
            <person name="Kelso J."/>
            <person name="Kitamura H."/>
            <person name="Kitano H."/>
            <person name="Kollias G."/>
            <person name="Krishnan S.P."/>
            <person name="Kruger A."/>
            <person name="Kummerfeld S.K."/>
            <person name="Kurochkin I.V."/>
            <person name="Lareau L.F."/>
            <person name="Lazarevic D."/>
            <person name="Lipovich L."/>
            <person name="Liu J."/>
            <person name="Liuni S."/>
            <person name="McWilliam S."/>
            <person name="Madan Babu M."/>
            <person name="Madera M."/>
            <person name="Marchionni L."/>
            <person name="Matsuda H."/>
            <person name="Matsuzawa S."/>
            <person name="Miki H."/>
            <person name="Mignone F."/>
            <person name="Miyake S."/>
            <person name="Morris K."/>
            <person name="Mottagui-Tabar S."/>
            <person name="Mulder N."/>
            <person name="Nakano N."/>
            <person name="Nakauchi H."/>
            <person name="Ng P."/>
            <person name="Nilsson R."/>
            <person name="Nishiguchi S."/>
            <person name="Nishikawa S."/>
            <person name="Nori F."/>
            <person name="Ohara O."/>
            <person name="Okazaki Y."/>
            <person name="Orlando V."/>
            <person name="Pang K.C."/>
            <person name="Pavan W.J."/>
            <person name="Pavesi G."/>
            <person name="Pesole G."/>
            <person name="Petrovsky N."/>
            <person name="Piazza S."/>
            <person name="Reed J."/>
            <person name="Reid J.F."/>
            <person name="Ring B.Z."/>
            <person name="Ringwald M."/>
            <person name="Rost B."/>
            <person name="Ruan Y."/>
            <person name="Salzberg S.L."/>
            <person name="Sandelin A."/>
            <person name="Schneider C."/>
            <person name="Schoenbach C."/>
            <person name="Sekiguchi K."/>
            <person name="Semple C.A."/>
            <person name="Seno S."/>
            <person name="Sessa L."/>
            <person name="Sheng Y."/>
            <person name="Shibata Y."/>
            <person name="Shimada H."/>
            <person name="Shimada K."/>
            <person name="Silva D."/>
            <person name="Sinclair B."/>
            <person name="Sperling S."/>
            <person name="Stupka E."/>
            <person name="Sugiura K."/>
            <person name="Sultana R."/>
            <person name="Takenaka Y."/>
            <person name="Taki K."/>
            <person name="Tammoja K."/>
            <person name="Tan S.L."/>
            <person name="Tang S."/>
            <person name="Taylor M.S."/>
            <person name="Tegner J."/>
            <person name="Teichmann S.A."/>
            <person name="Ueda H.R."/>
            <person name="van Nimwegen E."/>
            <person name="Verardo R."/>
            <person name="Wei C.L."/>
            <person name="Yagi K."/>
            <person name="Yamanishi H."/>
            <person name="Zabarovsky E."/>
            <person name="Zhu S."/>
            <person name="Zimmer A."/>
            <person name="Hide W."/>
            <person name="Bult C."/>
            <person name="Grimmond S.M."/>
            <person name="Teasdale R.D."/>
            <person name="Liu E.T."/>
            <person name="Brusic V."/>
            <person name="Quackenbush J."/>
            <person name="Wahlestedt C."/>
            <person name="Mattick J.S."/>
            <person name="Hume D.A."/>
            <person name="Kai C."/>
            <person name="Sasaki D."/>
            <person name="Tomaru Y."/>
            <person name="Fukuda S."/>
            <person name="Kanamori-Katayama M."/>
            <person name="Suzuki M."/>
            <person name="Aoki J."/>
            <person name="Arakawa T."/>
            <person name="Iida J."/>
            <person name="Imamura K."/>
            <person name="Itoh M."/>
            <person name="Kato T."/>
            <person name="Kawaji H."/>
            <person name="Kawagashira N."/>
            <person name="Kawashima T."/>
            <person name="Kojima M."/>
            <person name="Kondo S."/>
            <person name="Konno H."/>
            <person name="Nakano K."/>
            <person name="Ninomiya N."/>
            <person name="Nishio T."/>
            <person name="Okada M."/>
            <person name="Plessy C."/>
            <person name="Shibata K."/>
            <person name="Shiraki T."/>
            <person name="Suzuki S."/>
            <person name="Tagami M."/>
            <person name="Waki K."/>
            <person name="Watahiki A."/>
            <person name="Okamura-Oho Y."/>
            <person name="Suzuki H."/>
            <person name="Kawai J."/>
            <person name="Hayashizaki Y."/>
        </authorList>
    </citation>
    <scope>NUCLEOTIDE SEQUENCE [LARGE SCALE MRNA] (ISOFORMS 1 AND 2)</scope>
    <source>
        <strain>C57BL/6J</strain>
        <tissue>Cecum</tissue>
        <tissue>Urinary bladder</tissue>
    </source>
</reference>
<comment type="function">
    <text evidence="5">Probable tyrosine protein-kinase, which has strong transforming capabilities on a variety of cell lines including NIH 3T3 fibroblasts and on athymic nude mice. When overexpressed, it can also induce tumor cell invasion as well as metastasis in distant organs. May act by activating both MAP kinase and phosphatidylinositol 3'-kinases (PI3K) pathways.</text>
</comment>
<comment type="catalytic activity">
    <reaction evidence="3">
        <text>L-tyrosyl-[protein] + ATP = O-phospho-L-tyrosyl-[protein] + ADP + H(+)</text>
        <dbReference type="Rhea" id="RHEA:10596"/>
        <dbReference type="Rhea" id="RHEA-COMP:10136"/>
        <dbReference type="Rhea" id="RHEA-COMP:20101"/>
        <dbReference type="ChEBI" id="CHEBI:15378"/>
        <dbReference type="ChEBI" id="CHEBI:30616"/>
        <dbReference type="ChEBI" id="CHEBI:46858"/>
        <dbReference type="ChEBI" id="CHEBI:61978"/>
        <dbReference type="ChEBI" id="CHEBI:456216"/>
        <dbReference type="EC" id="2.7.10.2"/>
    </reaction>
</comment>
<comment type="subcellular location">
    <subcellularLocation>
        <location evidence="7">Membrane</location>
        <topology evidence="7">Single-pass membrane protein</topology>
    </subcellularLocation>
</comment>
<comment type="alternative products">
    <event type="alternative splicing"/>
    <isoform>
        <id>Q6J9G1-1</id>
        <name>1</name>
        <sequence type="displayed"/>
    </isoform>
    <isoform>
        <id>Q6J9G1-2</id>
        <name>2</name>
        <sequence type="described" ref="VSP_013427"/>
    </isoform>
</comment>
<comment type="tissue specificity">
    <text evidence="5">Highly expressed in colon and small intestine. Weakly or not expressed in spleen, skeletal muscle, liver, kidney, heart and brain. Expressed in transformed kidney cell lines (COS-1 and HEK293T).</text>
</comment>
<comment type="similarity">
    <text evidence="2">Belongs to the protein kinase superfamily. Tyr protein kinase family.</text>
</comment>
<keyword id="KW-0025">Alternative splicing</keyword>
<keyword id="KW-0067">ATP-binding</keyword>
<keyword id="KW-0418">Kinase</keyword>
<keyword id="KW-0472">Membrane</keyword>
<keyword id="KW-0547">Nucleotide-binding</keyword>
<keyword id="KW-0656">Proto-oncogene</keyword>
<keyword id="KW-1185">Reference proteome</keyword>
<keyword id="KW-0808">Transferase</keyword>
<keyword id="KW-0812">Transmembrane</keyword>
<keyword id="KW-1133">Transmembrane helix</keyword>
<keyword id="KW-0829">Tyrosine-protein kinase</keyword>
<sequence>MGEKGHLSRVLLECSLSDKLCVVREKQYEVIIVPALLVGGFLILLAIILWLFIRGQRSQRQSPGPRGTASVPASRGRSQEAAGHGEKVLLPLKETSVEGFLRAATPRLAKLQVPREQLLEVLEQIHSGSCGTLYHATMTTKDHPKPKSVVLKALEDPVGLQEVQDFIGRIQFYQYLGKHKNLVQLEGCCTERLPLYMMLEDVVPGDLLSFLWTCRRDVMTMDGLLYDLTEKQIYHIGKQILLALEFLQEKHLFHGDVAARNILIQSDLTPKLCHLGLAYEVHAHGAISSARSSTIPLKWLAPERLLLRPASIRGDIWSFGILLYEMVTLGAPPYPEVPPTSILQYLQRKKIMKRPSSCSHAMYNIMKCCWRWSEDSRPLLGQLLQRLEAASRSADDKAVLQVPELVVPELYADVAGIRAESISYSFSVL</sequence>
<feature type="chain" id="PRO_0000088164" description="Tyrosine-protein kinase STYK1">
    <location>
        <begin position="1"/>
        <end position="429"/>
    </location>
</feature>
<feature type="transmembrane region" description="Helical" evidence="1">
    <location>
        <begin position="30"/>
        <end position="50"/>
    </location>
</feature>
<feature type="domain" description="Protein kinase" evidence="2">
    <location>
        <begin position="119"/>
        <end position="390"/>
    </location>
</feature>
<feature type="region of interest" description="Disordered" evidence="4">
    <location>
        <begin position="58"/>
        <end position="83"/>
    </location>
</feature>
<feature type="active site" description="Proton acceptor" evidence="2 3">
    <location>
        <position position="256"/>
    </location>
</feature>
<feature type="binding site" evidence="2">
    <location>
        <begin position="125"/>
        <end position="133"/>
    </location>
    <ligand>
        <name>ATP</name>
        <dbReference type="ChEBI" id="CHEBI:30616"/>
    </ligand>
</feature>
<feature type="binding site" evidence="2">
    <location>
        <position position="152"/>
    </location>
    <ligand>
        <name>ATP</name>
        <dbReference type="ChEBI" id="CHEBI:30616"/>
    </ligand>
</feature>
<feature type="splice variant" id="VSP_013427" description="In isoform 2." evidence="6">
    <location>
        <begin position="67"/>
        <end position="155"/>
    </location>
</feature>
<feature type="sequence conflict" description="In Ref. 1; AAT01225." evidence="7" ref="1">
    <original>R</original>
    <variation>Q</variation>
    <location>
        <position position="24"/>
    </location>
</feature>
<feature type="sequence conflict" description="In Ref. 1." evidence="7" ref="1">
    <original>M</original>
    <variation>V</variation>
    <location>
        <position position="138"/>
    </location>
</feature>
<feature type="sequence conflict" description="In Ref. 1." evidence="7" ref="1">
    <original>T</original>
    <variation>A</variation>
    <location>
        <position position="140"/>
    </location>
</feature>
<accession>Q6J9G1</accession>
<accession>Q8BZH6</accession>
<accession>Q8BZT1</accession>
<evidence type="ECO:0000255" key="1"/>
<evidence type="ECO:0000255" key="2">
    <source>
        <dbReference type="PROSITE-ProRule" id="PRU00159"/>
    </source>
</evidence>
<evidence type="ECO:0000255" key="3">
    <source>
        <dbReference type="PROSITE-ProRule" id="PRU10028"/>
    </source>
</evidence>
<evidence type="ECO:0000256" key="4">
    <source>
        <dbReference type="SAM" id="MobiDB-lite"/>
    </source>
</evidence>
<evidence type="ECO:0000269" key="5">
    <source>
    </source>
</evidence>
<evidence type="ECO:0000303" key="6">
    <source>
    </source>
</evidence>
<evidence type="ECO:0000305" key="7"/>
<dbReference type="EC" id="2.7.10.2"/>
<dbReference type="EMBL" id="AY563053">
    <property type="protein sequence ID" value="AAT01225.1"/>
    <property type="molecule type" value="mRNA"/>
</dbReference>
<dbReference type="EMBL" id="AK033606">
    <property type="protein sequence ID" value="BAC28386.1"/>
    <property type="molecule type" value="mRNA"/>
</dbReference>
<dbReference type="EMBL" id="AK035247">
    <property type="protein sequence ID" value="BAC29000.1"/>
    <property type="molecule type" value="mRNA"/>
</dbReference>
<dbReference type="CCDS" id="CCDS20604.1">
    <molecule id="Q6J9G1-1"/>
</dbReference>
<dbReference type="RefSeq" id="NP_001398609.1">
    <molecule id="Q6J9G1-1"/>
    <property type="nucleotide sequence ID" value="NM_001411680.1"/>
</dbReference>
<dbReference type="RefSeq" id="NP_001398610.1">
    <molecule id="Q6J9G1-1"/>
    <property type="nucleotide sequence ID" value="NM_001411681.1"/>
</dbReference>
<dbReference type="RefSeq" id="NP_001398611.1">
    <molecule id="Q6J9G1-1"/>
    <property type="nucleotide sequence ID" value="NM_001411682.1"/>
</dbReference>
<dbReference type="RefSeq" id="NP_001398612.1">
    <molecule id="Q6J9G1-2"/>
    <property type="nucleotide sequence ID" value="NM_001411683.1"/>
</dbReference>
<dbReference type="RefSeq" id="NP_001398613.1">
    <molecule id="Q6J9G1-2"/>
    <property type="nucleotide sequence ID" value="NM_001411684.1"/>
</dbReference>
<dbReference type="RefSeq" id="NP_766479.1">
    <molecule id="Q6J9G1-1"/>
    <property type="nucleotide sequence ID" value="NM_172891.3"/>
</dbReference>
<dbReference type="RefSeq" id="XP_006506194.1">
    <molecule id="Q6J9G1-1"/>
    <property type="nucleotide sequence ID" value="XM_006506131.4"/>
</dbReference>
<dbReference type="RefSeq" id="XP_006506195.1">
    <molecule id="Q6J9G1-1"/>
    <property type="nucleotide sequence ID" value="XM_006506132.4"/>
</dbReference>
<dbReference type="SMR" id="Q6J9G1"/>
<dbReference type="FunCoup" id="Q6J9G1">
    <property type="interactions" value="997"/>
</dbReference>
<dbReference type="STRING" id="10090.ENSMUSP00000044098"/>
<dbReference type="iPTMnet" id="Q6J9G1"/>
<dbReference type="PhosphoSitePlus" id="Q6J9G1"/>
<dbReference type="PaxDb" id="10090-ENSMUSP00000044098"/>
<dbReference type="ProteomicsDB" id="258668">
    <molecule id="Q6J9G1-1"/>
</dbReference>
<dbReference type="ProteomicsDB" id="258669">
    <molecule id="Q6J9G1-2"/>
</dbReference>
<dbReference type="Antibodypedia" id="23371">
    <property type="antibodies" value="327 antibodies from 34 providers"/>
</dbReference>
<dbReference type="DNASU" id="243659"/>
<dbReference type="Ensembl" id="ENSMUST00000049150.8">
    <molecule id="Q6J9G1-1"/>
    <property type="protein sequence ID" value="ENSMUSP00000044098.2"/>
    <property type="gene ID" value="ENSMUSG00000032899.15"/>
</dbReference>
<dbReference type="Ensembl" id="ENSMUST00000121078.2">
    <molecule id="Q6J9G1-2"/>
    <property type="protein sequence ID" value="ENSMUSP00000112900.2"/>
    <property type="gene ID" value="ENSMUSG00000032899.15"/>
</dbReference>
<dbReference type="GeneID" id="243659"/>
<dbReference type="KEGG" id="mmu:243659"/>
<dbReference type="UCSC" id="uc009eir.1">
    <molecule id="Q6J9G1-1"/>
    <property type="organism name" value="mouse"/>
</dbReference>
<dbReference type="UCSC" id="uc012eub.1">
    <molecule id="Q6J9G1-2"/>
    <property type="organism name" value="mouse"/>
</dbReference>
<dbReference type="AGR" id="MGI:2141396"/>
<dbReference type="CTD" id="55359"/>
<dbReference type="MGI" id="MGI:2141396">
    <property type="gene designation" value="Styk1"/>
</dbReference>
<dbReference type="VEuPathDB" id="HostDB:ENSMUSG00000032899"/>
<dbReference type="eggNOG" id="KOG0200">
    <property type="taxonomic scope" value="Eukaryota"/>
</dbReference>
<dbReference type="GeneTree" id="ENSGT00940000157871"/>
<dbReference type="HOGENOM" id="CLU_000288_7_7_1"/>
<dbReference type="InParanoid" id="Q6J9G1"/>
<dbReference type="OMA" id="SCCQWKE"/>
<dbReference type="OrthoDB" id="4062651at2759"/>
<dbReference type="PhylomeDB" id="Q6J9G1"/>
<dbReference type="TreeFam" id="TF316675"/>
<dbReference type="BioGRID-ORCS" id="243659">
    <property type="hits" value="1 hit in 79 CRISPR screens"/>
</dbReference>
<dbReference type="PRO" id="PR:Q6J9G1"/>
<dbReference type="Proteomes" id="UP000000589">
    <property type="component" value="Chromosome 6"/>
</dbReference>
<dbReference type="RNAct" id="Q6J9G1">
    <property type="molecule type" value="protein"/>
</dbReference>
<dbReference type="Bgee" id="ENSMUSG00000032899">
    <property type="expression patterns" value="Expressed in animal zygote and 125 other cell types or tissues"/>
</dbReference>
<dbReference type="GO" id="GO:0005886">
    <property type="term" value="C:plasma membrane"/>
    <property type="evidence" value="ECO:0007669"/>
    <property type="project" value="Ensembl"/>
</dbReference>
<dbReference type="GO" id="GO:0005524">
    <property type="term" value="F:ATP binding"/>
    <property type="evidence" value="ECO:0007669"/>
    <property type="project" value="UniProtKB-KW"/>
</dbReference>
<dbReference type="GO" id="GO:0004715">
    <property type="term" value="F:non-membrane spanning protein tyrosine kinase activity"/>
    <property type="evidence" value="ECO:0007669"/>
    <property type="project" value="UniProtKB-EC"/>
</dbReference>
<dbReference type="FunFam" id="3.30.200.20:FF:000442">
    <property type="entry name" value="Serine/threonine/tyrosine kinase 1"/>
    <property type="match status" value="1"/>
</dbReference>
<dbReference type="FunFam" id="1.10.510.10:FF:000450">
    <property type="entry name" value="Tyrosine-protein kinase STYK1"/>
    <property type="match status" value="1"/>
</dbReference>
<dbReference type="Gene3D" id="3.30.200.20">
    <property type="entry name" value="Phosphorylase Kinase, domain 1"/>
    <property type="match status" value="1"/>
</dbReference>
<dbReference type="Gene3D" id="1.10.510.10">
    <property type="entry name" value="Transferase(Phosphotransferase) domain 1"/>
    <property type="match status" value="1"/>
</dbReference>
<dbReference type="InterPro" id="IPR011009">
    <property type="entry name" value="Kinase-like_dom_sf"/>
</dbReference>
<dbReference type="InterPro" id="IPR000719">
    <property type="entry name" value="Prot_kinase_dom"/>
</dbReference>
<dbReference type="InterPro" id="IPR050122">
    <property type="entry name" value="RTK"/>
</dbReference>
<dbReference type="InterPro" id="IPR001245">
    <property type="entry name" value="Ser-Thr/Tyr_kinase_cat_dom"/>
</dbReference>
<dbReference type="InterPro" id="IPR008266">
    <property type="entry name" value="Tyr_kinase_AS"/>
</dbReference>
<dbReference type="PANTHER" id="PTHR24416:SF631">
    <property type="entry name" value="SERINE_THREONINE_TYROSINE KINASE 1"/>
    <property type="match status" value="1"/>
</dbReference>
<dbReference type="PANTHER" id="PTHR24416">
    <property type="entry name" value="TYROSINE-PROTEIN KINASE RECEPTOR"/>
    <property type="match status" value="1"/>
</dbReference>
<dbReference type="Pfam" id="PF07714">
    <property type="entry name" value="PK_Tyr_Ser-Thr"/>
    <property type="match status" value="1"/>
</dbReference>
<dbReference type="PRINTS" id="PR00109">
    <property type="entry name" value="TYRKINASE"/>
</dbReference>
<dbReference type="SUPFAM" id="SSF56112">
    <property type="entry name" value="Protein kinase-like (PK-like)"/>
    <property type="match status" value="1"/>
</dbReference>
<dbReference type="PROSITE" id="PS50011">
    <property type="entry name" value="PROTEIN_KINASE_DOM"/>
    <property type="match status" value="1"/>
</dbReference>
<dbReference type="PROSITE" id="PS00109">
    <property type="entry name" value="PROTEIN_KINASE_TYR"/>
    <property type="match status" value="1"/>
</dbReference>
<proteinExistence type="evidence at transcript level"/>